<keyword id="KW-0156">Chromatin regulator</keyword>
<keyword id="KW-0227">DNA damage</keyword>
<keyword id="KW-0234">DNA repair</keyword>
<keyword id="KW-0539">Nucleus</keyword>
<keyword id="KW-1185">Reference proteome</keyword>
<keyword id="KW-0804">Transcription</keyword>
<keyword id="KW-0805">Transcription regulation</keyword>
<sequence>MLYTDGEKVLCFHGPLIYAAKILKAEKWTGEENVTGQVGPHYLVHYDGWKKTWDEWVPETRLLKHNDENLARKATLQEAAKAGSLISSAEKSAASTSAASSLKRAKDSELPDRKSASRGTKRSREHVEAEEEFLKRPEVKISLPDELKLQLVDDWENITKNGQLVPLPRNPCVKDILDDYRKHYLASKRSDPSKQRSPQLVDEVLKGLKLYFDRSLGQNLLYRFERAQYVDYRKKNGPKMGDGDVGNARTANGSMGGEMEPSNVYGAEHLLRLFVTLPMIIVHTSMDAESISLLKEHLAEFLSYIVREKHRLFVREYETASPAYHRISST</sequence>
<evidence type="ECO:0000250" key="1"/>
<evidence type="ECO:0000255" key="2"/>
<evidence type="ECO:0000255" key="3">
    <source>
        <dbReference type="PROSITE-ProRule" id="PRU00972"/>
    </source>
</evidence>
<evidence type="ECO:0000256" key="4">
    <source>
        <dbReference type="SAM" id="MobiDB-lite"/>
    </source>
</evidence>
<evidence type="ECO:0000305" key="5"/>
<comment type="function">
    <text evidence="1">Involved in deacetylation of histones, chromatin assembly and chromosome segregation. May act as a transcriptional oscillator, directing histone deacetylases to specific chromosomal domains. Component of the NuA4 histone acetyltransferase complex which is involved in transcriptional activation of selected genes principally by acetylation of nucleosomal histone H4 and H2A. The NuA4 complex is also involved in DNA repair (By similarity).</text>
</comment>
<comment type="subunit">
    <text evidence="1">Component of the NuA4 histone acetyltransferase complex.</text>
</comment>
<comment type="subcellular location">
    <subcellularLocation>
        <location evidence="3">Nucleus</location>
    </subcellularLocation>
</comment>
<comment type="similarity">
    <text evidence="5">Belongs to the MRG family.</text>
</comment>
<name>EAF3_MYCMD</name>
<organism>
    <name type="scientific">Mycosarcoma maydis</name>
    <name type="common">Corn smut fungus</name>
    <name type="synonym">Ustilago maydis</name>
    <dbReference type="NCBI Taxonomy" id="5270"/>
    <lineage>
        <taxon>Eukaryota</taxon>
        <taxon>Fungi</taxon>
        <taxon>Dikarya</taxon>
        <taxon>Basidiomycota</taxon>
        <taxon>Ustilaginomycotina</taxon>
        <taxon>Ustilaginomycetes</taxon>
        <taxon>Ustilaginales</taxon>
        <taxon>Ustilaginaceae</taxon>
        <taxon>Mycosarcoma</taxon>
    </lineage>
</organism>
<protein>
    <recommendedName>
        <fullName>Chromatin modification-related protein EAF3</fullName>
    </recommendedName>
</protein>
<feature type="chain" id="PRO_0000088781" description="Chromatin modification-related protein EAF3">
    <location>
        <begin position="1"/>
        <end position="330"/>
    </location>
</feature>
<feature type="domain" description="Tudor-knot" evidence="2">
    <location>
        <begin position="5"/>
        <end position="62"/>
    </location>
</feature>
<feature type="domain" description="MRG" evidence="3">
    <location>
        <begin position="135"/>
        <end position="329"/>
    </location>
</feature>
<feature type="region of interest" description="Disordered" evidence="4">
    <location>
        <begin position="96"/>
        <end position="129"/>
    </location>
</feature>
<feature type="compositionally biased region" description="Basic and acidic residues" evidence="4">
    <location>
        <begin position="104"/>
        <end position="115"/>
    </location>
</feature>
<reference key="1">
    <citation type="journal article" date="2006" name="Nature">
        <title>Insights from the genome of the biotrophic fungal plant pathogen Ustilago maydis.</title>
        <authorList>
            <person name="Kaemper J."/>
            <person name="Kahmann R."/>
            <person name="Boelker M."/>
            <person name="Ma L.-J."/>
            <person name="Brefort T."/>
            <person name="Saville B.J."/>
            <person name="Banuett F."/>
            <person name="Kronstad J.W."/>
            <person name="Gold S.E."/>
            <person name="Mueller O."/>
            <person name="Perlin M.H."/>
            <person name="Woesten H.A.B."/>
            <person name="de Vries R."/>
            <person name="Ruiz-Herrera J."/>
            <person name="Reynaga-Pena C.G."/>
            <person name="Snetselaar K."/>
            <person name="McCann M."/>
            <person name="Perez-Martin J."/>
            <person name="Feldbruegge M."/>
            <person name="Basse C.W."/>
            <person name="Steinberg G."/>
            <person name="Ibeas J.I."/>
            <person name="Holloman W."/>
            <person name="Guzman P."/>
            <person name="Farman M.L."/>
            <person name="Stajich J.E."/>
            <person name="Sentandreu R."/>
            <person name="Gonzalez-Prieto J.M."/>
            <person name="Kennell J.C."/>
            <person name="Molina L."/>
            <person name="Schirawski J."/>
            <person name="Mendoza-Mendoza A."/>
            <person name="Greilinger D."/>
            <person name="Muench K."/>
            <person name="Roessel N."/>
            <person name="Scherer M."/>
            <person name="Vranes M."/>
            <person name="Ladendorf O."/>
            <person name="Vincon V."/>
            <person name="Fuchs U."/>
            <person name="Sandrock B."/>
            <person name="Meng S."/>
            <person name="Ho E.C.H."/>
            <person name="Cahill M.J."/>
            <person name="Boyce K.J."/>
            <person name="Klose J."/>
            <person name="Klosterman S.J."/>
            <person name="Deelstra H.J."/>
            <person name="Ortiz-Castellanos L."/>
            <person name="Li W."/>
            <person name="Sanchez-Alonso P."/>
            <person name="Schreier P.H."/>
            <person name="Haeuser-Hahn I."/>
            <person name="Vaupel M."/>
            <person name="Koopmann E."/>
            <person name="Friedrich G."/>
            <person name="Voss H."/>
            <person name="Schlueter T."/>
            <person name="Margolis J."/>
            <person name="Platt D."/>
            <person name="Swimmer C."/>
            <person name="Gnirke A."/>
            <person name="Chen F."/>
            <person name="Vysotskaia V."/>
            <person name="Mannhaupt G."/>
            <person name="Gueldener U."/>
            <person name="Muensterkoetter M."/>
            <person name="Haase D."/>
            <person name="Oesterheld M."/>
            <person name="Mewes H.-W."/>
            <person name="Mauceli E.W."/>
            <person name="DeCaprio D."/>
            <person name="Wade C.M."/>
            <person name="Butler J."/>
            <person name="Young S.K."/>
            <person name="Jaffe D.B."/>
            <person name="Calvo S.E."/>
            <person name="Nusbaum C."/>
            <person name="Galagan J.E."/>
            <person name="Birren B.W."/>
        </authorList>
    </citation>
    <scope>NUCLEOTIDE SEQUENCE [LARGE SCALE GENOMIC DNA]</scope>
    <source>
        <strain>DSM 14603 / FGSC 9021 / UM521</strain>
    </source>
</reference>
<reference key="2">
    <citation type="submission" date="2014-09" db="EMBL/GenBank/DDBJ databases">
        <authorList>
            <person name="Gueldener U."/>
            <person name="Muensterkoetter M."/>
            <person name="Walter M.C."/>
            <person name="Mannhaupt G."/>
            <person name="Kahmann R."/>
        </authorList>
    </citation>
    <scope>GENOME REANNOTATION</scope>
    <source>
        <strain>DSM 14603 / FGSC 9021 / UM521</strain>
    </source>
</reference>
<accession>Q4P827</accession>
<accession>A0A0D1E094</accession>
<gene>
    <name type="primary">EAF3</name>
    <name type="ORF">UMAG_10504</name>
</gene>
<dbReference type="EMBL" id="CM003149">
    <property type="protein sequence ID" value="KIS68155.1"/>
    <property type="molecule type" value="Genomic_DNA"/>
</dbReference>
<dbReference type="RefSeq" id="XP_011390327.1">
    <property type="nucleotide sequence ID" value="XM_011392025.1"/>
</dbReference>
<dbReference type="SMR" id="Q4P827"/>
<dbReference type="FunCoup" id="Q4P827">
    <property type="interactions" value="358"/>
</dbReference>
<dbReference type="STRING" id="237631.Q4P827"/>
<dbReference type="EnsemblFungi" id="KIS68155">
    <property type="protein sequence ID" value="KIS68155"/>
    <property type="gene ID" value="UMAG_10504"/>
</dbReference>
<dbReference type="GeneID" id="23566531"/>
<dbReference type="KEGG" id="uma:UMAG_10504"/>
<dbReference type="VEuPathDB" id="FungiDB:UMAG_10504"/>
<dbReference type="eggNOG" id="KOG3001">
    <property type="taxonomic scope" value="Eukaryota"/>
</dbReference>
<dbReference type="HOGENOM" id="CLU_039566_1_1_1"/>
<dbReference type="InParanoid" id="Q4P827"/>
<dbReference type="OrthoDB" id="124855at2759"/>
<dbReference type="Proteomes" id="UP000000561">
    <property type="component" value="Chromosome 10"/>
</dbReference>
<dbReference type="GO" id="GO:0035267">
    <property type="term" value="C:NuA4 histone acetyltransferase complex"/>
    <property type="evidence" value="ECO:0000318"/>
    <property type="project" value="GO_Central"/>
</dbReference>
<dbReference type="GO" id="GO:1990453">
    <property type="term" value="C:nucleosome disassembly/reassembly complex"/>
    <property type="evidence" value="ECO:0007669"/>
    <property type="project" value="EnsemblFungi"/>
</dbReference>
<dbReference type="GO" id="GO:0032221">
    <property type="term" value="C:Rpd3S complex"/>
    <property type="evidence" value="ECO:0000318"/>
    <property type="project" value="GO_Central"/>
</dbReference>
<dbReference type="GO" id="GO:0140566">
    <property type="term" value="F:histone reader activity"/>
    <property type="evidence" value="ECO:0007669"/>
    <property type="project" value="EnsemblFungi"/>
</dbReference>
<dbReference type="GO" id="GO:0035064">
    <property type="term" value="F:methylated histone binding"/>
    <property type="evidence" value="ECO:0007669"/>
    <property type="project" value="EnsemblFungi"/>
</dbReference>
<dbReference type="GO" id="GO:0006281">
    <property type="term" value="P:DNA repair"/>
    <property type="evidence" value="ECO:0007669"/>
    <property type="project" value="UniProtKB-KW"/>
</dbReference>
<dbReference type="GO" id="GO:0006335">
    <property type="term" value="P:DNA replication-dependent chromatin assembly"/>
    <property type="evidence" value="ECO:0007669"/>
    <property type="project" value="EnsemblFungi"/>
</dbReference>
<dbReference type="GO" id="GO:0060195">
    <property type="term" value="P:negative regulation of antisense RNA transcription"/>
    <property type="evidence" value="ECO:0007669"/>
    <property type="project" value="EnsemblFungi"/>
</dbReference>
<dbReference type="GO" id="GO:0006337">
    <property type="term" value="P:nucleosome disassembly"/>
    <property type="evidence" value="ECO:0007669"/>
    <property type="project" value="EnsemblFungi"/>
</dbReference>
<dbReference type="GO" id="GO:0032968">
    <property type="term" value="P:positive regulation of transcription elongation by RNA polymerase II"/>
    <property type="evidence" value="ECO:0007669"/>
    <property type="project" value="EnsemblFungi"/>
</dbReference>
<dbReference type="GO" id="GO:0030174">
    <property type="term" value="P:regulation of DNA-templated DNA replication initiation"/>
    <property type="evidence" value="ECO:0007669"/>
    <property type="project" value="EnsemblFungi"/>
</dbReference>
<dbReference type="GO" id="GO:0043487">
    <property type="term" value="P:regulation of RNA stability"/>
    <property type="evidence" value="ECO:0007669"/>
    <property type="project" value="EnsemblFungi"/>
</dbReference>
<dbReference type="GO" id="GO:0006368">
    <property type="term" value="P:transcription elongation by RNA polymerase II"/>
    <property type="evidence" value="ECO:0007669"/>
    <property type="project" value="EnsemblFungi"/>
</dbReference>
<dbReference type="CDD" id="cd18983">
    <property type="entry name" value="CBD_MSL3_like"/>
    <property type="match status" value="1"/>
</dbReference>
<dbReference type="FunFam" id="1.10.274.30:FF:000004">
    <property type="entry name" value="Putative Chromatin modification-related protein eaf3"/>
    <property type="match status" value="1"/>
</dbReference>
<dbReference type="Gene3D" id="2.30.30.140">
    <property type="match status" value="1"/>
</dbReference>
<dbReference type="Gene3D" id="1.10.274.30">
    <property type="entry name" value="MRG domain"/>
    <property type="match status" value="1"/>
</dbReference>
<dbReference type="InterPro" id="IPR016197">
    <property type="entry name" value="Chromo-like_dom_sf"/>
</dbReference>
<dbReference type="InterPro" id="IPR000953">
    <property type="entry name" value="Chromo/chromo_shadow_dom"/>
</dbReference>
<dbReference type="InterPro" id="IPR008676">
    <property type="entry name" value="MRG"/>
</dbReference>
<dbReference type="InterPro" id="IPR038217">
    <property type="entry name" value="MRG_C_sf"/>
</dbReference>
<dbReference type="InterPro" id="IPR026541">
    <property type="entry name" value="MRG_dom"/>
</dbReference>
<dbReference type="InterPro" id="IPR053820">
    <property type="entry name" value="MSL3_chromo-like"/>
</dbReference>
<dbReference type="PANTHER" id="PTHR10880">
    <property type="entry name" value="MORTALITY FACTOR 4-LIKE PROTEIN"/>
    <property type="match status" value="1"/>
</dbReference>
<dbReference type="PANTHER" id="PTHR10880:SF15">
    <property type="entry name" value="MSL COMPLEX SUBUNIT 3"/>
    <property type="match status" value="1"/>
</dbReference>
<dbReference type="Pfam" id="PF05712">
    <property type="entry name" value="MRG"/>
    <property type="match status" value="1"/>
</dbReference>
<dbReference type="Pfam" id="PF22732">
    <property type="entry name" value="MSL3_chromo-like"/>
    <property type="match status" value="1"/>
</dbReference>
<dbReference type="PIRSF" id="PIRSF038133">
    <property type="entry name" value="HAT_Nua4_EAF3/MRG15"/>
    <property type="match status" value="1"/>
</dbReference>
<dbReference type="SMART" id="SM00298">
    <property type="entry name" value="CHROMO"/>
    <property type="match status" value="1"/>
</dbReference>
<dbReference type="SUPFAM" id="SSF54160">
    <property type="entry name" value="Chromo domain-like"/>
    <property type="match status" value="1"/>
</dbReference>
<dbReference type="PROSITE" id="PS51640">
    <property type="entry name" value="MRG"/>
    <property type="match status" value="1"/>
</dbReference>
<proteinExistence type="inferred from homology"/>